<dbReference type="EMBL" id="CP000970">
    <property type="protein sequence ID" value="ACB16099.1"/>
    <property type="molecule type" value="Genomic_DNA"/>
</dbReference>
<dbReference type="RefSeq" id="WP_001144069.1">
    <property type="nucleotide sequence ID" value="NC_010498.1"/>
</dbReference>
<dbReference type="SMR" id="B1LF57"/>
<dbReference type="GeneID" id="98390195"/>
<dbReference type="KEGG" id="ecm:EcSMS35_3358"/>
<dbReference type="HOGENOM" id="CLU_159258_1_0_6"/>
<dbReference type="Proteomes" id="UP000007011">
    <property type="component" value="Chromosome"/>
</dbReference>
<dbReference type="GO" id="GO:1990904">
    <property type="term" value="C:ribonucleoprotein complex"/>
    <property type="evidence" value="ECO:0007669"/>
    <property type="project" value="UniProtKB-KW"/>
</dbReference>
<dbReference type="GO" id="GO:0005840">
    <property type="term" value="C:ribosome"/>
    <property type="evidence" value="ECO:0007669"/>
    <property type="project" value="UniProtKB-KW"/>
</dbReference>
<dbReference type="GO" id="GO:0003735">
    <property type="term" value="F:structural constituent of ribosome"/>
    <property type="evidence" value="ECO:0007669"/>
    <property type="project" value="InterPro"/>
</dbReference>
<dbReference type="GO" id="GO:0006412">
    <property type="term" value="P:translation"/>
    <property type="evidence" value="ECO:0007669"/>
    <property type="project" value="UniProtKB-UniRule"/>
</dbReference>
<dbReference type="FunFam" id="1.20.5.1150:FF:000001">
    <property type="entry name" value="30S ribosomal protein S21"/>
    <property type="match status" value="1"/>
</dbReference>
<dbReference type="Gene3D" id="1.20.5.1150">
    <property type="entry name" value="Ribosomal protein S8"/>
    <property type="match status" value="1"/>
</dbReference>
<dbReference type="HAMAP" id="MF_00358">
    <property type="entry name" value="Ribosomal_bS21"/>
    <property type="match status" value="1"/>
</dbReference>
<dbReference type="InterPro" id="IPR001911">
    <property type="entry name" value="Ribosomal_bS21"/>
</dbReference>
<dbReference type="InterPro" id="IPR018278">
    <property type="entry name" value="Ribosomal_bS21_CS"/>
</dbReference>
<dbReference type="InterPro" id="IPR038380">
    <property type="entry name" value="Ribosomal_bS21_sf"/>
</dbReference>
<dbReference type="NCBIfam" id="TIGR00030">
    <property type="entry name" value="S21p"/>
    <property type="match status" value="1"/>
</dbReference>
<dbReference type="PANTHER" id="PTHR21109">
    <property type="entry name" value="MITOCHONDRIAL 28S RIBOSOMAL PROTEIN S21"/>
    <property type="match status" value="1"/>
</dbReference>
<dbReference type="PANTHER" id="PTHR21109:SF22">
    <property type="entry name" value="SMALL RIBOSOMAL SUBUNIT PROTEIN BS21"/>
    <property type="match status" value="1"/>
</dbReference>
<dbReference type="Pfam" id="PF01165">
    <property type="entry name" value="Ribosomal_S21"/>
    <property type="match status" value="1"/>
</dbReference>
<dbReference type="PRINTS" id="PR00976">
    <property type="entry name" value="RIBOSOMALS21"/>
</dbReference>
<dbReference type="PROSITE" id="PS01181">
    <property type="entry name" value="RIBOSOMAL_S21"/>
    <property type="match status" value="1"/>
</dbReference>
<accession>B1LF57</accession>
<comment type="similarity">
    <text evidence="1">Belongs to the bacterial ribosomal protein bS21 family.</text>
</comment>
<reference key="1">
    <citation type="journal article" date="2008" name="J. Bacteriol.">
        <title>Insights into the environmental resistance gene pool from the genome sequence of the multidrug-resistant environmental isolate Escherichia coli SMS-3-5.</title>
        <authorList>
            <person name="Fricke W.F."/>
            <person name="Wright M.S."/>
            <person name="Lindell A.H."/>
            <person name="Harkins D.M."/>
            <person name="Baker-Austin C."/>
            <person name="Ravel J."/>
            <person name="Stepanauskas R."/>
        </authorList>
    </citation>
    <scope>NUCLEOTIDE SEQUENCE [LARGE SCALE GENOMIC DNA]</scope>
    <source>
        <strain>SMS-3-5 / SECEC</strain>
    </source>
</reference>
<gene>
    <name evidence="1" type="primary">rpsU</name>
    <name type="ordered locus">EcSMS35_3358</name>
</gene>
<protein>
    <recommendedName>
        <fullName evidence="1">Small ribosomal subunit protein bS21</fullName>
    </recommendedName>
    <alternativeName>
        <fullName evidence="3">30S ribosomal protein S21</fullName>
    </alternativeName>
</protein>
<name>RS21_ECOSM</name>
<evidence type="ECO:0000255" key="1">
    <source>
        <dbReference type="HAMAP-Rule" id="MF_00358"/>
    </source>
</evidence>
<evidence type="ECO:0000256" key="2">
    <source>
        <dbReference type="SAM" id="MobiDB-lite"/>
    </source>
</evidence>
<evidence type="ECO:0000305" key="3"/>
<organism>
    <name type="scientific">Escherichia coli (strain SMS-3-5 / SECEC)</name>
    <dbReference type="NCBI Taxonomy" id="439855"/>
    <lineage>
        <taxon>Bacteria</taxon>
        <taxon>Pseudomonadati</taxon>
        <taxon>Pseudomonadota</taxon>
        <taxon>Gammaproteobacteria</taxon>
        <taxon>Enterobacterales</taxon>
        <taxon>Enterobacteriaceae</taxon>
        <taxon>Escherichia</taxon>
    </lineage>
</organism>
<keyword id="KW-0687">Ribonucleoprotein</keyword>
<keyword id="KW-0689">Ribosomal protein</keyword>
<sequence>MPVIKVRENEPFDVALRRFKRSCEKAGVLAEVRRREFYEKPTTERKRAKASAVKRHAKKLARENARRTRLY</sequence>
<feature type="chain" id="PRO_1000120619" description="Small ribosomal subunit protein bS21">
    <location>
        <begin position="1"/>
        <end position="71"/>
    </location>
</feature>
<feature type="region of interest" description="Disordered" evidence="2">
    <location>
        <begin position="43"/>
        <end position="71"/>
    </location>
</feature>
<feature type="compositionally biased region" description="Basic residues" evidence="2">
    <location>
        <begin position="46"/>
        <end position="59"/>
    </location>
</feature>
<feature type="compositionally biased region" description="Basic and acidic residues" evidence="2">
    <location>
        <begin position="60"/>
        <end position="71"/>
    </location>
</feature>
<proteinExistence type="inferred from homology"/>